<accession>B1H0H8</accession>
<comment type="function">
    <text evidence="1">Plays an important role in the de novo pathway of purine nucleotide biosynthesis. Catalyzes the first committed step in the biosynthesis of AMP from IMP.</text>
</comment>
<comment type="catalytic activity">
    <reaction evidence="1">
        <text>IMP + L-aspartate + GTP = N(6)-(1,2-dicarboxyethyl)-AMP + GDP + phosphate + 2 H(+)</text>
        <dbReference type="Rhea" id="RHEA:15753"/>
        <dbReference type="ChEBI" id="CHEBI:15378"/>
        <dbReference type="ChEBI" id="CHEBI:29991"/>
        <dbReference type="ChEBI" id="CHEBI:37565"/>
        <dbReference type="ChEBI" id="CHEBI:43474"/>
        <dbReference type="ChEBI" id="CHEBI:57567"/>
        <dbReference type="ChEBI" id="CHEBI:58053"/>
        <dbReference type="ChEBI" id="CHEBI:58189"/>
        <dbReference type="EC" id="6.3.4.4"/>
    </reaction>
</comment>
<comment type="cofactor">
    <cofactor evidence="1">
        <name>Mg(2+)</name>
        <dbReference type="ChEBI" id="CHEBI:18420"/>
    </cofactor>
    <text evidence="1">Binds 1 Mg(2+) ion per subunit.</text>
</comment>
<comment type="pathway">
    <text evidence="1">Purine metabolism; AMP biosynthesis via de novo pathway; AMP from IMP: step 1/2.</text>
</comment>
<comment type="subunit">
    <text evidence="1">Homodimer.</text>
</comment>
<comment type="subcellular location">
    <subcellularLocation>
        <location evidence="1">Cytoplasm</location>
    </subcellularLocation>
</comment>
<comment type="similarity">
    <text evidence="1">Belongs to the adenylosuccinate synthetase family.</text>
</comment>
<name>PURA_ENDTX</name>
<proteinExistence type="inferred from homology"/>
<gene>
    <name evidence="1" type="primary">purA</name>
    <name type="ordered locus">TGRD_527</name>
</gene>
<evidence type="ECO:0000255" key="1">
    <source>
        <dbReference type="HAMAP-Rule" id="MF_00011"/>
    </source>
</evidence>
<feature type="chain" id="PRO_1000089350" description="Adenylosuccinate synthetase">
    <location>
        <begin position="1"/>
        <end position="429"/>
    </location>
</feature>
<feature type="active site" description="Proton acceptor" evidence="1">
    <location>
        <position position="13"/>
    </location>
</feature>
<feature type="active site" description="Proton donor" evidence="1">
    <location>
        <position position="41"/>
    </location>
</feature>
<feature type="binding site" evidence="1">
    <location>
        <begin position="12"/>
        <end position="18"/>
    </location>
    <ligand>
        <name>GTP</name>
        <dbReference type="ChEBI" id="CHEBI:37565"/>
    </ligand>
</feature>
<feature type="binding site" description="in other chain" evidence="1">
    <location>
        <begin position="13"/>
        <end position="16"/>
    </location>
    <ligand>
        <name>IMP</name>
        <dbReference type="ChEBI" id="CHEBI:58053"/>
        <note>ligand shared between dimeric partners</note>
    </ligand>
</feature>
<feature type="binding site" evidence="1">
    <location>
        <position position="13"/>
    </location>
    <ligand>
        <name>Mg(2+)</name>
        <dbReference type="ChEBI" id="CHEBI:18420"/>
    </ligand>
</feature>
<feature type="binding site" description="in other chain" evidence="1">
    <location>
        <begin position="38"/>
        <end position="41"/>
    </location>
    <ligand>
        <name>IMP</name>
        <dbReference type="ChEBI" id="CHEBI:58053"/>
        <note>ligand shared between dimeric partners</note>
    </ligand>
</feature>
<feature type="binding site" evidence="1">
    <location>
        <begin position="40"/>
        <end position="42"/>
    </location>
    <ligand>
        <name>GTP</name>
        <dbReference type="ChEBI" id="CHEBI:37565"/>
    </ligand>
</feature>
<feature type="binding site" evidence="1">
    <location>
        <position position="40"/>
    </location>
    <ligand>
        <name>Mg(2+)</name>
        <dbReference type="ChEBI" id="CHEBI:18420"/>
    </ligand>
</feature>
<feature type="binding site" description="in other chain" evidence="1">
    <location>
        <position position="127"/>
    </location>
    <ligand>
        <name>IMP</name>
        <dbReference type="ChEBI" id="CHEBI:58053"/>
        <note>ligand shared between dimeric partners</note>
    </ligand>
</feature>
<feature type="binding site" evidence="1">
    <location>
        <position position="141"/>
    </location>
    <ligand>
        <name>IMP</name>
        <dbReference type="ChEBI" id="CHEBI:58053"/>
        <note>ligand shared between dimeric partners</note>
    </ligand>
</feature>
<feature type="binding site" description="in other chain" evidence="1">
    <location>
        <position position="222"/>
    </location>
    <ligand>
        <name>IMP</name>
        <dbReference type="ChEBI" id="CHEBI:58053"/>
        <note>ligand shared between dimeric partners</note>
    </ligand>
</feature>
<feature type="binding site" description="in other chain" evidence="1">
    <location>
        <position position="237"/>
    </location>
    <ligand>
        <name>IMP</name>
        <dbReference type="ChEBI" id="CHEBI:58053"/>
        <note>ligand shared between dimeric partners</note>
    </ligand>
</feature>
<feature type="binding site" evidence="1">
    <location>
        <begin position="297"/>
        <end position="303"/>
    </location>
    <ligand>
        <name>substrate</name>
    </ligand>
</feature>
<feature type="binding site" description="in other chain" evidence="1">
    <location>
        <position position="301"/>
    </location>
    <ligand>
        <name>IMP</name>
        <dbReference type="ChEBI" id="CHEBI:58053"/>
        <note>ligand shared between dimeric partners</note>
    </ligand>
</feature>
<feature type="binding site" evidence="1">
    <location>
        <position position="303"/>
    </location>
    <ligand>
        <name>GTP</name>
        <dbReference type="ChEBI" id="CHEBI:37565"/>
    </ligand>
</feature>
<feature type="binding site" evidence="1">
    <location>
        <begin position="329"/>
        <end position="331"/>
    </location>
    <ligand>
        <name>GTP</name>
        <dbReference type="ChEBI" id="CHEBI:37565"/>
    </ligand>
</feature>
<feature type="binding site" evidence="1">
    <location>
        <begin position="411"/>
        <end position="413"/>
    </location>
    <ligand>
        <name>GTP</name>
        <dbReference type="ChEBI" id="CHEBI:37565"/>
    </ligand>
</feature>
<reference key="1">
    <citation type="journal article" date="2008" name="Proc. Natl. Acad. Sci. U.S.A.">
        <title>Complete genome of the uncultured termite group 1 bacteria in a single host protist cell.</title>
        <authorList>
            <person name="Hongoh Y."/>
            <person name="Sharma V.K."/>
            <person name="Prakash T."/>
            <person name="Noda S."/>
            <person name="Taylor T.D."/>
            <person name="Kudo T."/>
            <person name="Sakaki Y."/>
            <person name="Toyoda A."/>
            <person name="Hattori M."/>
            <person name="Ohkuma M."/>
        </authorList>
    </citation>
    <scope>NUCLEOTIDE SEQUENCE [LARGE SCALE GENOMIC DNA]</scope>
</reference>
<organism>
    <name type="scientific">Endomicrobium trichonymphae</name>
    <dbReference type="NCBI Taxonomy" id="1408204"/>
    <lineage>
        <taxon>Bacteria</taxon>
        <taxon>Pseudomonadati</taxon>
        <taxon>Elusimicrobiota</taxon>
        <taxon>Endomicrobiia</taxon>
        <taxon>Endomicrobiales</taxon>
        <taxon>Endomicrobiaceae</taxon>
        <taxon>Candidatus Endomicrobiellum</taxon>
    </lineage>
</organism>
<protein>
    <recommendedName>
        <fullName evidence="1">Adenylosuccinate synthetase</fullName>
        <shortName evidence="1">AMPSase</shortName>
        <shortName evidence="1">AdSS</shortName>
        <ecNumber evidence="1">6.3.4.4</ecNumber>
    </recommendedName>
    <alternativeName>
        <fullName evidence="1">IMP--aspartate ligase</fullName>
    </alternativeName>
</protein>
<keyword id="KW-0963">Cytoplasm</keyword>
<keyword id="KW-0342">GTP-binding</keyword>
<keyword id="KW-0436">Ligase</keyword>
<keyword id="KW-0460">Magnesium</keyword>
<keyword id="KW-0479">Metal-binding</keyword>
<keyword id="KW-0547">Nucleotide-binding</keyword>
<keyword id="KW-0658">Purine biosynthesis</keyword>
<sequence>MSTLVVLGTQWGDEGKGKVIHYLAKQADYIVRYQGGNNAGHTLIHENKPFILHLIPSGILFPDKYCLITNGVVVDPKALKEEIAILDKNNISVEKRFFISEQAHIILPYHKLIDGILEEENVKIGTTRRGIGPAYADKVKRIGIRVVDYLEKDVFEDLLEKNLIEKTPILKNSGVDIANLKEEILKDREELSIFLEPFVTDTSIMIANAIKKNKKILFESAQGTMLDLDFGTYPFVTSSNPIAGGVCSGAGVGPTKIDSVLGVVKAYTTRVGEGPFTVELFDEMGKFLREKGAEYGATTGRPRRCGWFDAVVVRHSVRLSGIKHLILTKLDCVEDIDKIKICVAYKYKDKLYKEFPASRTVQKYAEPVYEEMPGFKGKVKGIIDFEKLPLNAQKYVKRLEQLVDAPIDLISLGRKREETIEVRKGVNWF</sequence>
<dbReference type="EC" id="6.3.4.4" evidence="1"/>
<dbReference type="EMBL" id="AP009510">
    <property type="protein sequence ID" value="BAG14010.1"/>
    <property type="molecule type" value="Genomic_DNA"/>
</dbReference>
<dbReference type="RefSeq" id="WP_015423535.1">
    <property type="nucleotide sequence ID" value="NC_020419.1"/>
</dbReference>
<dbReference type="SMR" id="B1H0H8"/>
<dbReference type="STRING" id="471821.TGRD_527"/>
<dbReference type="KEGG" id="rsd:TGRD_527"/>
<dbReference type="PATRIC" id="fig|471821.5.peg.861"/>
<dbReference type="HOGENOM" id="CLU_029848_0_0_0"/>
<dbReference type="UniPathway" id="UPA00075">
    <property type="reaction ID" value="UER00335"/>
</dbReference>
<dbReference type="Proteomes" id="UP000001691">
    <property type="component" value="Chromosome"/>
</dbReference>
<dbReference type="GO" id="GO:0005737">
    <property type="term" value="C:cytoplasm"/>
    <property type="evidence" value="ECO:0007669"/>
    <property type="project" value="UniProtKB-SubCell"/>
</dbReference>
<dbReference type="GO" id="GO:0004019">
    <property type="term" value="F:adenylosuccinate synthase activity"/>
    <property type="evidence" value="ECO:0007669"/>
    <property type="project" value="UniProtKB-UniRule"/>
</dbReference>
<dbReference type="GO" id="GO:0005525">
    <property type="term" value="F:GTP binding"/>
    <property type="evidence" value="ECO:0007669"/>
    <property type="project" value="UniProtKB-UniRule"/>
</dbReference>
<dbReference type="GO" id="GO:0000287">
    <property type="term" value="F:magnesium ion binding"/>
    <property type="evidence" value="ECO:0007669"/>
    <property type="project" value="UniProtKB-UniRule"/>
</dbReference>
<dbReference type="GO" id="GO:0044208">
    <property type="term" value="P:'de novo' AMP biosynthetic process"/>
    <property type="evidence" value="ECO:0007669"/>
    <property type="project" value="UniProtKB-UniRule"/>
</dbReference>
<dbReference type="GO" id="GO:0046040">
    <property type="term" value="P:IMP metabolic process"/>
    <property type="evidence" value="ECO:0007669"/>
    <property type="project" value="TreeGrafter"/>
</dbReference>
<dbReference type="CDD" id="cd03108">
    <property type="entry name" value="AdSS"/>
    <property type="match status" value="1"/>
</dbReference>
<dbReference type="FunFam" id="1.10.300.10:FF:000001">
    <property type="entry name" value="Adenylosuccinate synthetase"/>
    <property type="match status" value="1"/>
</dbReference>
<dbReference type="FunFam" id="3.90.170.10:FF:000001">
    <property type="entry name" value="Adenylosuccinate synthetase"/>
    <property type="match status" value="1"/>
</dbReference>
<dbReference type="Gene3D" id="3.40.440.10">
    <property type="entry name" value="Adenylosuccinate Synthetase, subunit A, domain 1"/>
    <property type="match status" value="1"/>
</dbReference>
<dbReference type="Gene3D" id="1.10.300.10">
    <property type="entry name" value="Adenylosuccinate Synthetase, subunit A, domain 2"/>
    <property type="match status" value="1"/>
</dbReference>
<dbReference type="Gene3D" id="3.90.170.10">
    <property type="entry name" value="Adenylosuccinate Synthetase, subunit A, domain 3"/>
    <property type="match status" value="1"/>
</dbReference>
<dbReference type="HAMAP" id="MF_00011">
    <property type="entry name" value="Adenylosucc_synth"/>
    <property type="match status" value="1"/>
</dbReference>
<dbReference type="InterPro" id="IPR018220">
    <property type="entry name" value="Adenylosuccin_syn_GTP-bd"/>
</dbReference>
<dbReference type="InterPro" id="IPR033128">
    <property type="entry name" value="Adenylosuccin_syn_Lys_AS"/>
</dbReference>
<dbReference type="InterPro" id="IPR042109">
    <property type="entry name" value="Adenylosuccinate_synth_dom1"/>
</dbReference>
<dbReference type="InterPro" id="IPR042110">
    <property type="entry name" value="Adenylosuccinate_synth_dom2"/>
</dbReference>
<dbReference type="InterPro" id="IPR042111">
    <property type="entry name" value="Adenylosuccinate_synth_dom3"/>
</dbReference>
<dbReference type="InterPro" id="IPR001114">
    <property type="entry name" value="Adenylosuccinate_synthetase"/>
</dbReference>
<dbReference type="InterPro" id="IPR027417">
    <property type="entry name" value="P-loop_NTPase"/>
</dbReference>
<dbReference type="NCBIfam" id="NF002223">
    <property type="entry name" value="PRK01117.1"/>
    <property type="match status" value="1"/>
</dbReference>
<dbReference type="NCBIfam" id="TIGR00184">
    <property type="entry name" value="purA"/>
    <property type="match status" value="1"/>
</dbReference>
<dbReference type="PANTHER" id="PTHR11846">
    <property type="entry name" value="ADENYLOSUCCINATE SYNTHETASE"/>
    <property type="match status" value="1"/>
</dbReference>
<dbReference type="PANTHER" id="PTHR11846:SF0">
    <property type="entry name" value="ADENYLOSUCCINATE SYNTHETASE"/>
    <property type="match status" value="1"/>
</dbReference>
<dbReference type="Pfam" id="PF00709">
    <property type="entry name" value="Adenylsucc_synt"/>
    <property type="match status" value="1"/>
</dbReference>
<dbReference type="SMART" id="SM00788">
    <property type="entry name" value="Adenylsucc_synt"/>
    <property type="match status" value="1"/>
</dbReference>
<dbReference type="SUPFAM" id="SSF52540">
    <property type="entry name" value="P-loop containing nucleoside triphosphate hydrolases"/>
    <property type="match status" value="1"/>
</dbReference>
<dbReference type="PROSITE" id="PS01266">
    <property type="entry name" value="ADENYLOSUCCIN_SYN_1"/>
    <property type="match status" value="1"/>
</dbReference>
<dbReference type="PROSITE" id="PS00513">
    <property type="entry name" value="ADENYLOSUCCIN_SYN_2"/>
    <property type="match status" value="1"/>
</dbReference>